<dbReference type="EMBL" id="AP000388">
    <property type="protein sequence ID" value="BAB02947.1"/>
    <property type="status" value="ALT_SEQ"/>
    <property type="molecule type" value="Genomic_DNA"/>
</dbReference>
<dbReference type="EMBL" id="CP002686">
    <property type="protein sequence ID" value="AEE77529.1"/>
    <property type="status" value="ALT_SEQ"/>
    <property type="molecule type" value="Genomic_DNA"/>
</dbReference>
<dbReference type="EMBL" id="CP002686">
    <property type="protein sequence ID" value="ANM64980.1"/>
    <property type="molecule type" value="Genomic_DNA"/>
</dbReference>
<dbReference type="RefSeq" id="NP_001326980.1">
    <property type="nucleotide sequence ID" value="NM_001339003.1"/>
</dbReference>
<dbReference type="RefSeq" id="NP_189548.1">
    <property type="nucleotide sequence ID" value="NM_113827.2"/>
</dbReference>
<dbReference type="SMR" id="Q9LJW1"/>
<dbReference type="STRING" id="3702.Q9LJW1"/>
<dbReference type="iPTMnet" id="Q9LJW1"/>
<dbReference type="EnsemblPlants" id="AT3G29050.2">
    <property type="protein sequence ID" value="AT3G29050.2"/>
    <property type="gene ID" value="AT3G29050"/>
</dbReference>
<dbReference type="GeneID" id="822549"/>
<dbReference type="Gramene" id="AT3G29050.2">
    <property type="protein sequence ID" value="AT3G29050.2"/>
    <property type="gene ID" value="AT3G29050"/>
</dbReference>
<dbReference type="KEGG" id="ath:AT3G29050"/>
<dbReference type="Araport" id="AT3G29050"/>
<dbReference type="TAIR" id="AT3G29050"/>
<dbReference type="InParanoid" id="Q9LJW1"/>
<dbReference type="OMA" id="VECVSHN"/>
<dbReference type="PhylomeDB" id="Q9LJW1"/>
<dbReference type="PRO" id="PR:Q9LJW1"/>
<dbReference type="Proteomes" id="UP000006548">
    <property type="component" value="Chromosome 3"/>
</dbReference>
<dbReference type="ExpressionAtlas" id="Q9LJW1">
    <property type="expression patterns" value="baseline"/>
</dbReference>
<dbReference type="GO" id="GO:0005576">
    <property type="term" value="C:extracellular region"/>
    <property type="evidence" value="ECO:0007669"/>
    <property type="project" value="UniProtKB-SubCell"/>
</dbReference>
<dbReference type="CDD" id="cd23509">
    <property type="entry name" value="Gnk2-like"/>
    <property type="match status" value="2"/>
</dbReference>
<dbReference type="Gene3D" id="3.30.430.20">
    <property type="entry name" value="Gnk2 domain, C-X8-C-X2-C motif"/>
    <property type="match status" value="2"/>
</dbReference>
<dbReference type="InterPro" id="IPR050581">
    <property type="entry name" value="CRR_secretory_protein"/>
</dbReference>
<dbReference type="InterPro" id="IPR002902">
    <property type="entry name" value="GNK2"/>
</dbReference>
<dbReference type="InterPro" id="IPR038408">
    <property type="entry name" value="GNK2_sf"/>
</dbReference>
<dbReference type="PANTHER" id="PTHR32411:SF53">
    <property type="entry name" value="CYSTEINE-RICH REPEAT SECRETORY PROTEIN 18-RELATED"/>
    <property type="match status" value="1"/>
</dbReference>
<dbReference type="PANTHER" id="PTHR32411">
    <property type="entry name" value="CYSTEINE-RICH REPEAT SECRETORY PROTEIN 38-RELATED"/>
    <property type="match status" value="1"/>
</dbReference>
<dbReference type="Pfam" id="PF01657">
    <property type="entry name" value="Stress-antifung"/>
    <property type="match status" value="2"/>
</dbReference>
<dbReference type="PROSITE" id="PS51473">
    <property type="entry name" value="GNK2"/>
    <property type="match status" value="2"/>
</dbReference>
<sequence>MSSFCLSKHLILVPILVMMAQLLLIRNVLSLNMNNPYLYHKCSANQGEYKLGSLYKKSLDSGIQQLSKDNEVFRGGFVYMDHTDPNGTLRVYITFQCRGDIYGSHCRSCFATARAELFKRCPRDKAAIIWYDQCFLEFSSISTGGKINYDDNICIDTARARPNAKTHTGDDSVLEFLRLFENLTNIAVTKRNNFVKDVEKPALYAAGEKRFGNKKIYVMVQCTHDLTPRACVECVNHNVRQFQDCYEDKPVGLKKGARVLGRSCNFRFERYPFVNAKTSPNYLKF</sequence>
<feature type="signal peptide" evidence="1">
    <location>
        <begin position="1"/>
        <end position="30"/>
    </location>
</feature>
<feature type="chain" id="PRO_0000296142" description="Putative cysteine-rich repeat secretory protein 14">
    <location>
        <begin position="31"/>
        <end position="285"/>
    </location>
</feature>
<feature type="domain" description="Gnk2-homologous 1" evidence="2">
    <location>
        <begin position="37"/>
        <end position="143"/>
    </location>
</feature>
<feature type="domain" description="Gnk2-homologous 2" evidence="2">
    <location>
        <begin position="161"/>
        <end position="273"/>
    </location>
</feature>
<reference key="1">
    <citation type="journal article" date="2000" name="DNA Res.">
        <title>Structural analysis of Arabidopsis thaliana chromosome 3. II. Sequence features of the 4,251,695 bp regions covered by 90 P1, TAC and BAC clones.</title>
        <authorList>
            <person name="Kaneko T."/>
            <person name="Katoh T."/>
            <person name="Sato S."/>
            <person name="Nakamura Y."/>
            <person name="Asamizu E."/>
            <person name="Tabata S."/>
        </authorList>
    </citation>
    <scope>NUCLEOTIDE SEQUENCE [LARGE SCALE GENOMIC DNA]</scope>
    <source>
        <strain>cv. Columbia</strain>
    </source>
</reference>
<reference key="2">
    <citation type="journal article" date="2017" name="Plant J.">
        <title>Araport11: a complete reannotation of the Arabidopsis thaliana reference genome.</title>
        <authorList>
            <person name="Cheng C.Y."/>
            <person name="Krishnakumar V."/>
            <person name="Chan A.P."/>
            <person name="Thibaud-Nissen F."/>
            <person name="Schobel S."/>
            <person name="Town C.D."/>
        </authorList>
    </citation>
    <scope>GENOME REANNOTATION</scope>
    <source>
        <strain>cv. Columbia</strain>
    </source>
</reference>
<reference key="3">
    <citation type="journal article" date="2001" name="Plant Physiol.">
        <title>A superfamily of proteins with novel cysteine-rich repeats.</title>
        <authorList>
            <person name="Chen Z."/>
        </authorList>
    </citation>
    <scope>GENE FAMILY ORGANIZATION</scope>
    <scope>NOMENCLATURE</scope>
</reference>
<proteinExistence type="inferred from homology"/>
<gene>
    <name type="primary">CRRSP14</name>
    <name type="ordered locus">At3g29050</name>
    <name type="ORF">MRI12.3</name>
</gene>
<accession>Q9LJW1</accession>
<accession>F4J1S3</accession>
<organism>
    <name type="scientific">Arabidopsis thaliana</name>
    <name type="common">Mouse-ear cress</name>
    <dbReference type="NCBI Taxonomy" id="3702"/>
    <lineage>
        <taxon>Eukaryota</taxon>
        <taxon>Viridiplantae</taxon>
        <taxon>Streptophyta</taxon>
        <taxon>Embryophyta</taxon>
        <taxon>Tracheophyta</taxon>
        <taxon>Spermatophyta</taxon>
        <taxon>Magnoliopsida</taxon>
        <taxon>eudicotyledons</taxon>
        <taxon>Gunneridae</taxon>
        <taxon>Pentapetalae</taxon>
        <taxon>rosids</taxon>
        <taxon>malvids</taxon>
        <taxon>Brassicales</taxon>
        <taxon>Brassicaceae</taxon>
        <taxon>Camelineae</taxon>
        <taxon>Arabidopsis</taxon>
    </lineage>
</organism>
<evidence type="ECO:0000255" key="1"/>
<evidence type="ECO:0000255" key="2">
    <source>
        <dbReference type="PROSITE-ProRule" id="PRU00806"/>
    </source>
</evidence>
<evidence type="ECO:0000305" key="3"/>
<keyword id="KW-1185">Reference proteome</keyword>
<keyword id="KW-0677">Repeat</keyword>
<keyword id="KW-0964">Secreted</keyword>
<keyword id="KW-0732">Signal</keyword>
<comment type="subcellular location">
    <subcellularLocation>
        <location evidence="3">Secreted</location>
    </subcellularLocation>
</comment>
<comment type="similarity">
    <text evidence="3">Belongs to the cysteine-rich repeat secretory protein family.</text>
</comment>
<comment type="sequence caution" evidence="3">
    <conflict type="erroneous gene model prediction">
        <sequence resource="EMBL-CDS" id="AEE77529"/>
    </conflict>
</comment>
<comment type="sequence caution" evidence="3">
    <conflict type="erroneous gene model prediction">
        <sequence resource="EMBL-CDS" id="BAB02947"/>
    </conflict>
</comment>
<name>CRR14_ARATH</name>
<protein>
    <recommendedName>
        <fullName>Putative cysteine-rich repeat secretory protein 14</fullName>
    </recommendedName>
</protein>